<feature type="chain" id="PRO_0000353598" description="Large ribosomal subunit protein uL3">
    <location>
        <begin position="1"/>
        <end position="223"/>
    </location>
</feature>
<feature type="region of interest" description="Disordered" evidence="2">
    <location>
        <begin position="137"/>
        <end position="157"/>
    </location>
</feature>
<feature type="modified residue" description="N5-methylglutamine" evidence="1">
    <location>
        <position position="157"/>
    </location>
</feature>
<reference key="1">
    <citation type="journal article" date="2010" name="Genome Biol. Evol.">
        <title>Continuing evolution of Burkholderia mallei through genome reduction and large-scale rearrangements.</title>
        <authorList>
            <person name="Losada L."/>
            <person name="Ronning C.M."/>
            <person name="DeShazer D."/>
            <person name="Woods D."/>
            <person name="Fedorova N."/>
            <person name="Kim H.S."/>
            <person name="Shabalina S.A."/>
            <person name="Pearson T.R."/>
            <person name="Brinkac L."/>
            <person name="Tan P."/>
            <person name="Nandi T."/>
            <person name="Crabtree J."/>
            <person name="Badger J."/>
            <person name="Beckstrom-Sternberg S."/>
            <person name="Saqib M."/>
            <person name="Schutzer S.E."/>
            <person name="Keim P."/>
            <person name="Nierman W.C."/>
        </authorList>
    </citation>
    <scope>NUCLEOTIDE SEQUENCE [LARGE SCALE GENOMIC DNA]</scope>
    <source>
        <strain>1106a</strain>
    </source>
</reference>
<evidence type="ECO:0000255" key="1">
    <source>
        <dbReference type="HAMAP-Rule" id="MF_01325"/>
    </source>
</evidence>
<evidence type="ECO:0000256" key="2">
    <source>
        <dbReference type="SAM" id="MobiDB-lite"/>
    </source>
</evidence>
<evidence type="ECO:0000305" key="3"/>
<organism>
    <name type="scientific">Burkholderia pseudomallei (strain 1106a)</name>
    <dbReference type="NCBI Taxonomy" id="357348"/>
    <lineage>
        <taxon>Bacteria</taxon>
        <taxon>Pseudomonadati</taxon>
        <taxon>Pseudomonadota</taxon>
        <taxon>Betaproteobacteria</taxon>
        <taxon>Burkholderiales</taxon>
        <taxon>Burkholderiaceae</taxon>
        <taxon>Burkholderia</taxon>
        <taxon>pseudomallei group</taxon>
    </lineage>
</organism>
<sequence length="223" mass="23457">MEKTMSLGLVGRKVGMTRIFTAEGDSIPVTVLDVSDNRVTQIKTVETDGYTAVQVAFGSRRASRVTKPLAGHLAKAGVEAGEILKEFRIEADKAAELSNGAVIGPDLFEVGQKVDVQGVSIGKGYAGTIKRYNFGSGRASHGNSRSHNVPGSIGMAQDPGRVFPGKRMTGHMGDETVTVQNLEIARIDADRKLLLVKGAVPGAKGGKVFVTPAVKTRAVKGAK</sequence>
<keyword id="KW-0488">Methylation</keyword>
<keyword id="KW-0687">Ribonucleoprotein</keyword>
<keyword id="KW-0689">Ribosomal protein</keyword>
<keyword id="KW-0694">RNA-binding</keyword>
<keyword id="KW-0699">rRNA-binding</keyword>
<accession>A3P0B3</accession>
<gene>
    <name evidence="1" type="primary">rplC</name>
    <name type="ordered locus">BURPS1106A_3804</name>
</gene>
<comment type="function">
    <text evidence="1">One of the primary rRNA binding proteins, it binds directly near the 3'-end of the 23S rRNA, where it nucleates assembly of the 50S subunit.</text>
</comment>
<comment type="subunit">
    <text evidence="1">Part of the 50S ribosomal subunit. Forms a cluster with proteins L14 and L19.</text>
</comment>
<comment type="PTM">
    <text evidence="1">Methylated by PrmB.</text>
</comment>
<comment type="similarity">
    <text evidence="1">Belongs to the universal ribosomal protein uL3 family.</text>
</comment>
<proteinExistence type="inferred from homology"/>
<protein>
    <recommendedName>
        <fullName evidence="1">Large ribosomal subunit protein uL3</fullName>
    </recommendedName>
    <alternativeName>
        <fullName evidence="3">50S ribosomal protein L3</fullName>
    </alternativeName>
</protein>
<name>RL3_BURP0</name>
<dbReference type="EMBL" id="CP000572">
    <property type="protein sequence ID" value="ABN90958.1"/>
    <property type="molecule type" value="Genomic_DNA"/>
</dbReference>
<dbReference type="SMR" id="A3P0B3"/>
<dbReference type="KEGG" id="bpl:BURPS1106A_3804"/>
<dbReference type="HOGENOM" id="CLU_044142_4_1_4"/>
<dbReference type="Proteomes" id="UP000006738">
    <property type="component" value="Chromosome I"/>
</dbReference>
<dbReference type="GO" id="GO:0022625">
    <property type="term" value="C:cytosolic large ribosomal subunit"/>
    <property type="evidence" value="ECO:0007669"/>
    <property type="project" value="TreeGrafter"/>
</dbReference>
<dbReference type="GO" id="GO:0019843">
    <property type="term" value="F:rRNA binding"/>
    <property type="evidence" value="ECO:0007669"/>
    <property type="project" value="UniProtKB-UniRule"/>
</dbReference>
<dbReference type="GO" id="GO:0003735">
    <property type="term" value="F:structural constituent of ribosome"/>
    <property type="evidence" value="ECO:0007669"/>
    <property type="project" value="InterPro"/>
</dbReference>
<dbReference type="GO" id="GO:0006412">
    <property type="term" value="P:translation"/>
    <property type="evidence" value="ECO:0007669"/>
    <property type="project" value="UniProtKB-UniRule"/>
</dbReference>
<dbReference type="FunFam" id="2.40.30.10:FF:000004">
    <property type="entry name" value="50S ribosomal protein L3"/>
    <property type="match status" value="1"/>
</dbReference>
<dbReference type="FunFam" id="3.30.160.810:FF:000001">
    <property type="entry name" value="50S ribosomal protein L3"/>
    <property type="match status" value="1"/>
</dbReference>
<dbReference type="Gene3D" id="3.30.160.810">
    <property type="match status" value="1"/>
</dbReference>
<dbReference type="Gene3D" id="2.40.30.10">
    <property type="entry name" value="Translation factors"/>
    <property type="match status" value="1"/>
</dbReference>
<dbReference type="HAMAP" id="MF_01325_B">
    <property type="entry name" value="Ribosomal_uL3_B"/>
    <property type="match status" value="1"/>
</dbReference>
<dbReference type="InterPro" id="IPR000597">
    <property type="entry name" value="Ribosomal_uL3"/>
</dbReference>
<dbReference type="InterPro" id="IPR019927">
    <property type="entry name" value="Ribosomal_uL3_bac/org-type"/>
</dbReference>
<dbReference type="InterPro" id="IPR019926">
    <property type="entry name" value="Ribosomal_uL3_CS"/>
</dbReference>
<dbReference type="InterPro" id="IPR009000">
    <property type="entry name" value="Transl_B-barrel_sf"/>
</dbReference>
<dbReference type="NCBIfam" id="TIGR03625">
    <property type="entry name" value="L3_bact"/>
    <property type="match status" value="1"/>
</dbReference>
<dbReference type="PANTHER" id="PTHR11229">
    <property type="entry name" value="50S RIBOSOMAL PROTEIN L3"/>
    <property type="match status" value="1"/>
</dbReference>
<dbReference type="PANTHER" id="PTHR11229:SF16">
    <property type="entry name" value="LARGE RIBOSOMAL SUBUNIT PROTEIN UL3C"/>
    <property type="match status" value="1"/>
</dbReference>
<dbReference type="Pfam" id="PF00297">
    <property type="entry name" value="Ribosomal_L3"/>
    <property type="match status" value="1"/>
</dbReference>
<dbReference type="SUPFAM" id="SSF50447">
    <property type="entry name" value="Translation proteins"/>
    <property type="match status" value="1"/>
</dbReference>
<dbReference type="PROSITE" id="PS00474">
    <property type="entry name" value="RIBOSOMAL_L3"/>
    <property type="match status" value="1"/>
</dbReference>